<evidence type="ECO:0000255" key="1">
    <source>
        <dbReference type="HAMAP-Rule" id="MF_00060"/>
    </source>
</evidence>
<reference key="1">
    <citation type="journal article" date="2004" name="Proc. Natl. Acad. Sci. U.S.A.">
        <title>Genomic plasticity of the causative agent of melioidosis, Burkholderia pseudomallei.</title>
        <authorList>
            <person name="Holden M.T.G."/>
            <person name="Titball R.W."/>
            <person name="Peacock S.J."/>
            <person name="Cerdeno-Tarraga A.-M."/>
            <person name="Atkins T."/>
            <person name="Crossman L.C."/>
            <person name="Pitt T."/>
            <person name="Churcher C."/>
            <person name="Mungall K.L."/>
            <person name="Bentley S.D."/>
            <person name="Sebaihia M."/>
            <person name="Thomson N.R."/>
            <person name="Bason N."/>
            <person name="Beacham I.R."/>
            <person name="Brooks K."/>
            <person name="Brown K.A."/>
            <person name="Brown N.F."/>
            <person name="Challis G.L."/>
            <person name="Cherevach I."/>
            <person name="Chillingworth T."/>
            <person name="Cronin A."/>
            <person name="Crossett B."/>
            <person name="Davis P."/>
            <person name="DeShazer D."/>
            <person name="Feltwell T."/>
            <person name="Fraser A."/>
            <person name="Hance Z."/>
            <person name="Hauser H."/>
            <person name="Holroyd S."/>
            <person name="Jagels K."/>
            <person name="Keith K.E."/>
            <person name="Maddison M."/>
            <person name="Moule S."/>
            <person name="Price C."/>
            <person name="Quail M.A."/>
            <person name="Rabbinowitsch E."/>
            <person name="Rutherford K."/>
            <person name="Sanders M."/>
            <person name="Simmonds M."/>
            <person name="Songsivilai S."/>
            <person name="Stevens K."/>
            <person name="Tumapa S."/>
            <person name="Vesaratchavest M."/>
            <person name="Whitehead S."/>
            <person name="Yeats C."/>
            <person name="Barrell B.G."/>
            <person name="Oyston P.C.F."/>
            <person name="Parkhill J."/>
        </authorList>
    </citation>
    <scope>NUCLEOTIDE SEQUENCE [LARGE SCALE GENOMIC DNA]</scope>
    <source>
        <strain>K96243</strain>
    </source>
</reference>
<protein>
    <recommendedName>
        <fullName evidence="1">5'-nucleotidase SurE</fullName>
        <ecNumber evidence="1">3.1.3.5</ecNumber>
    </recommendedName>
    <alternativeName>
        <fullName evidence="1">Nucleoside 5'-monophosphate phosphohydrolase</fullName>
    </alternativeName>
</protein>
<feature type="chain" id="PRO_0000235598" description="5'-nucleotidase SurE">
    <location>
        <begin position="1"/>
        <end position="253"/>
    </location>
</feature>
<feature type="binding site" evidence="1">
    <location>
        <position position="8"/>
    </location>
    <ligand>
        <name>a divalent metal cation</name>
        <dbReference type="ChEBI" id="CHEBI:60240"/>
    </ligand>
</feature>
<feature type="binding site" evidence="1">
    <location>
        <position position="9"/>
    </location>
    <ligand>
        <name>a divalent metal cation</name>
        <dbReference type="ChEBI" id="CHEBI:60240"/>
    </ligand>
</feature>
<feature type="binding site" evidence="1">
    <location>
        <position position="39"/>
    </location>
    <ligand>
        <name>a divalent metal cation</name>
        <dbReference type="ChEBI" id="CHEBI:60240"/>
    </ligand>
</feature>
<feature type="binding site" evidence="1">
    <location>
        <position position="92"/>
    </location>
    <ligand>
        <name>a divalent metal cation</name>
        <dbReference type="ChEBI" id="CHEBI:60240"/>
    </ligand>
</feature>
<proteinExistence type="inferred from homology"/>
<organism>
    <name type="scientific">Burkholderia pseudomallei (strain K96243)</name>
    <dbReference type="NCBI Taxonomy" id="272560"/>
    <lineage>
        <taxon>Bacteria</taxon>
        <taxon>Pseudomonadati</taxon>
        <taxon>Pseudomonadota</taxon>
        <taxon>Betaproteobacteria</taxon>
        <taxon>Burkholderiales</taxon>
        <taxon>Burkholderiaceae</taxon>
        <taxon>Burkholderia</taxon>
        <taxon>pseudomallei group</taxon>
    </lineage>
</organism>
<comment type="function">
    <text evidence="1">Nucleotidase that shows phosphatase activity on nucleoside 5'-monophosphates.</text>
</comment>
<comment type="catalytic activity">
    <reaction evidence="1">
        <text>a ribonucleoside 5'-phosphate + H2O = a ribonucleoside + phosphate</text>
        <dbReference type="Rhea" id="RHEA:12484"/>
        <dbReference type="ChEBI" id="CHEBI:15377"/>
        <dbReference type="ChEBI" id="CHEBI:18254"/>
        <dbReference type="ChEBI" id="CHEBI:43474"/>
        <dbReference type="ChEBI" id="CHEBI:58043"/>
        <dbReference type="EC" id="3.1.3.5"/>
    </reaction>
</comment>
<comment type="cofactor">
    <cofactor evidence="1">
        <name>a divalent metal cation</name>
        <dbReference type="ChEBI" id="CHEBI:60240"/>
    </cofactor>
    <text evidence="1">Binds 1 divalent metal cation per subunit.</text>
</comment>
<comment type="subcellular location">
    <subcellularLocation>
        <location evidence="1">Cytoplasm</location>
    </subcellularLocation>
</comment>
<comment type="similarity">
    <text evidence="1">Belongs to the SurE nucleotidase family.</text>
</comment>
<name>SURE_BURPS</name>
<dbReference type="EC" id="3.1.3.5" evidence="1"/>
<dbReference type="EMBL" id="BX571965">
    <property type="protein sequence ID" value="CAH35503.1"/>
    <property type="molecule type" value="Genomic_DNA"/>
</dbReference>
<dbReference type="RefSeq" id="WP_004527164.1">
    <property type="nucleotide sequence ID" value="NZ_CP009538.1"/>
</dbReference>
<dbReference type="RefSeq" id="YP_108122.1">
    <property type="nucleotide sequence ID" value="NC_006350.1"/>
</dbReference>
<dbReference type="SMR" id="Q63UU4"/>
<dbReference type="STRING" id="272560.BPSL1502"/>
<dbReference type="KEGG" id="bps:BPSL1502"/>
<dbReference type="PATRIC" id="fig|272560.51.peg.3538"/>
<dbReference type="eggNOG" id="COG0496">
    <property type="taxonomic scope" value="Bacteria"/>
</dbReference>
<dbReference type="Proteomes" id="UP000000605">
    <property type="component" value="Chromosome 1"/>
</dbReference>
<dbReference type="GO" id="GO:0005737">
    <property type="term" value="C:cytoplasm"/>
    <property type="evidence" value="ECO:0007669"/>
    <property type="project" value="UniProtKB-SubCell"/>
</dbReference>
<dbReference type="GO" id="GO:0008254">
    <property type="term" value="F:3'-nucleotidase activity"/>
    <property type="evidence" value="ECO:0007669"/>
    <property type="project" value="TreeGrafter"/>
</dbReference>
<dbReference type="GO" id="GO:0008253">
    <property type="term" value="F:5'-nucleotidase activity"/>
    <property type="evidence" value="ECO:0007669"/>
    <property type="project" value="UniProtKB-UniRule"/>
</dbReference>
<dbReference type="GO" id="GO:0004309">
    <property type="term" value="F:exopolyphosphatase activity"/>
    <property type="evidence" value="ECO:0007669"/>
    <property type="project" value="TreeGrafter"/>
</dbReference>
<dbReference type="GO" id="GO:0046872">
    <property type="term" value="F:metal ion binding"/>
    <property type="evidence" value="ECO:0007669"/>
    <property type="project" value="UniProtKB-UniRule"/>
</dbReference>
<dbReference type="GO" id="GO:0000166">
    <property type="term" value="F:nucleotide binding"/>
    <property type="evidence" value="ECO:0007669"/>
    <property type="project" value="UniProtKB-KW"/>
</dbReference>
<dbReference type="FunFam" id="3.40.1210.10:FF:000001">
    <property type="entry name" value="5'/3'-nucleotidase SurE"/>
    <property type="match status" value="1"/>
</dbReference>
<dbReference type="Gene3D" id="3.40.1210.10">
    <property type="entry name" value="Survival protein SurE-like phosphatase/nucleotidase"/>
    <property type="match status" value="1"/>
</dbReference>
<dbReference type="HAMAP" id="MF_00060">
    <property type="entry name" value="SurE"/>
    <property type="match status" value="1"/>
</dbReference>
<dbReference type="InterPro" id="IPR030048">
    <property type="entry name" value="SurE"/>
</dbReference>
<dbReference type="InterPro" id="IPR002828">
    <property type="entry name" value="SurE-like_Pase/nucleotidase"/>
</dbReference>
<dbReference type="InterPro" id="IPR036523">
    <property type="entry name" value="SurE-like_sf"/>
</dbReference>
<dbReference type="NCBIfam" id="NF001489">
    <property type="entry name" value="PRK00346.1-3"/>
    <property type="match status" value="1"/>
</dbReference>
<dbReference type="NCBIfam" id="NF001490">
    <property type="entry name" value="PRK00346.1-4"/>
    <property type="match status" value="1"/>
</dbReference>
<dbReference type="NCBIfam" id="TIGR00087">
    <property type="entry name" value="surE"/>
    <property type="match status" value="1"/>
</dbReference>
<dbReference type="PANTHER" id="PTHR30457">
    <property type="entry name" value="5'-NUCLEOTIDASE SURE"/>
    <property type="match status" value="1"/>
</dbReference>
<dbReference type="PANTHER" id="PTHR30457:SF12">
    <property type="entry name" value="5'_3'-NUCLEOTIDASE SURE"/>
    <property type="match status" value="1"/>
</dbReference>
<dbReference type="Pfam" id="PF01975">
    <property type="entry name" value="SurE"/>
    <property type="match status" value="1"/>
</dbReference>
<dbReference type="SUPFAM" id="SSF64167">
    <property type="entry name" value="SurE-like"/>
    <property type="match status" value="1"/>
</dbReference>
<sequence length="253" mass="26985">MRILLSNDDGYLAPGLAALYEALRPLAEILVMAPEQNCSGASNSLTLSRPLSVSRSAATGFYYVNGTPTDSVHVALTGMLDTKPDLVVSGINNGQNMGDDTLYSGTVAAATEGIMFGVPAIAFSLVHKEWAHLGDAARVAAEIVRHYLDHPLPGQPLLNINIPNLPYEELKGWRVTRLGKRHPSQPVIRQTNPRGEPIYWIGAAGDALDASEGTDFHATASGYVSITPLQLDLTHTQMLAATRDWARAGSGAS</sequence>
<keyword id="KW-0963">Cytoplasm</keyword>
<keyword id="KW-0378">Hydrolase</keyword>
<keyword id="KW-0479">Metal-binding</keyword>
<keyword id="KW-0547">Nucleotide-binding</keyword>
<keyword id="KW-1185">Reference proteome</keyword>
<gene>
    <name evidence="1" type="primary">surE</name>
    <name type="ordered locus">BPSL1502</name>
</gene>
<accession>Q63UU4</accession>